<name>CH60_STAAB</name>
<comment type="function">
    <text evidence="1">Together with its co-chaperonin GroES, plays an essential role in assisting protein folding. The GroEL-GroES system forms a nano-cage that allows encapsulation of the non-native substrate proteins and provides a physical environment optimized to promote and accelerate protein folding.</text>
</comment>
<comment type="catalytic activity">
    <reaction evidence="1">
        <text>ATP + H2O + a folded polypeptide = ADP + phosphate + an unfolded polypeptide.</text>
        <dbReference type="EC" id="5.6.1.7"/>
    </reaction>
</comment>
<comment type="subunit">
    <text evidence="1">Forms a cylinder of 14 subunits composed of two heptameric rings stacked back-to-back. Interacts with the co-chaperonin GroES.</text>
</comment>
<comment type="subcellular location">
    <subcellularLocation>
        <location evidence="1">Cytoplasm</location>
    </subcellularLocation>
</comment>
<comment type="similarity">
    <text evidence="1">Belongs to the chaperonin (HSP60) family.</text>
</comment>
<feature type="chain" id="PRO_0000256991" description="Chaperonin GroEL">
    <location>
        <begin position="1"/>
        <end position="538"/>
    </location>
</feature>
<feature type="binding site" evidence="1">
    <location>
        <begin position="29"/>
        <end position="32"/>
    </location>
    <ligand>
        <name>ATP</name>
        <dbReference type="ChEBI" id="CHEBI:30616"/>
    </ligand>
</feature>
<feature type="binding site" evidence="1">
    <location>
        <begin position="86"/>
        <end position="90"/>
    </location>
    <ligand>
        <name>ATP</name>
        <dbReference type="ChEBI" id="CHEBI:30616"/>
    </ligand>
</feature>
<feature type="binding site" evidence="1">
    <location>
        <position position="413"/>
    </location>
    <ligand>
        <name>ATP</name>
        <dbReference type="ChEBI" id="CHEBI:30616"/>
    </ligand>
</feature>
<feature type="binding site" evidence="1">
    <location>
        <begin position="476"/>
        <end position="478"/>
    </location>
    <ligand>
        <name>ATP</name>
        <dbReference type="ChEBI" id="CHEBI:30616"/>
    </ligand>
</feature>
<feature type="binding site" evidence="1">
    <location>
        <position position="492"/>
    </location>
    <ligand>
        <name>ATP</name>
        <dbReference type="ChEBI" id="CHEBI:30616"/>
    </ligand>
</feature>
<gene>
    <name evidence="1" type="primary">groEL</name>
    <name evidence="1" type="synonym">groL</name>
    <name type="ordered locus">SAB1913c</name>
</gene>
<evidence type="ECO:0000255" key="1">
    <source>
        <dbReference type="HAMAP-Rule" id="MF_00600"/>
    </source>
</evidence>
<keyword id="KW-0067">ATP-binding</keyword>
<keyword id="KW-0143">Chaperone</keyword>
<keyword id="KW-0963">Cytoplasm</keyword>
<keyword id="KW-0413">Isomerase</keyword>
<keyword id="KW-0547">Nucleotide-binding</keyword>
<proteinExistence type="inferred from homology"/>
<sequence>MVKQLKFSEDARQAMLRGVDQLANAVKVTIGPKGRNVVLDKEFTAPLITNDGVTIAKEIELEDPYENMGAKLVQEVANKTNEIAGDGTTTATVLAQAMIQEGLKNVTSGANPVGLRQGIDKAVKVAVEALHENSQKVENKNEIAQVGAISAADEEIGRYISEAMEKVGNDGVITIEESNGLNTELEVVEGMQFDRGYQSPYMVTDSDKMVAELERPYILVTDKKISSFQDILPLLEQVVQSNRPILIVADEVEGDALTNIVLNRMRGTFTAVAVKAPGFGDRRKAMLEDLAILTGAQVITDDLGLDLKDASIDMLGTASKVEVTKDNTTVVDGDGDENSIDARVSQLKSQIEETESDFDREKLQERLAKLAGGVAVIKVGAASETELKERKLRIEDALNSTRAAVEEGIVAGGGTALVNVYQKVSEIEAEGDIETGVNIVLKALTAPVRQIAENAGLEGSVIVERLKNAEPGVGFNAATDEWVNMLEAGIVDPTKVTRSALQHAASVAAMFLTTEAVVASIPEKNNDQPNMGGMPGMM</sequence>
<dbReference type="EC" id="5.6.1.7" evidence="1"/>
<dbReference type="EMBL" id="AJ938182">
    <property type="protein sequence ID" value="CAI81602.1"/>
    <property type="molecule type" value="Genomic_DNA"/>
</dbReference>
<dbReference type="RefSeq" id="WP_000240641.1">
    <property type="nucleotide sequence ID" value="NC_007622.1"/>
</dbReference>
<dbReference type="SMR" id="Q2YUD8"/>
<dbReference type="KEGG" id="sab:SAB1913c"/>
<dbReference type="HOGENOM" id="CLU_016503_3_0_9"/>
<dbReference type="GO" id="GO:0005737">
    <property type="term" value="C:cytoplasm"/>
    <property type="evidence" value="ECO:0007669"/>
    <property type="project" value="UniProtKB-SubCell"/>
</dbReference>
<dbReference type="GO" id="GO:0005524">
    <property type="term" value="F:ATP binding"/>
    <property type="evidence" value="ECO:0007669"/>
    <property type="project" value="UniProtKB-UniRule"/>
</dbReference>
<dbReference type="GO" id="GO:0140662">
    <property type="term" value="F:ATP-dependent protein folding chaperone"/>
    <property type="evidence" value="ECO:0007669"/>
    <property type="project" value="InterPro"/>
</dbReference>
<dbReference type="GO" id="GO:0016853">
    <property type="term" value="F:isomerase activity"/>
    <property type="evidence" value="ECO:0007669"/>
    <property type="project" value="UniProtKB-KW"/>
</dbReference>
<dbReference type="GO" id="GO:0051082">
    <property type="term" value="F:unfolded protein binding"/>
    <property type="evidence" value="ECO:0007669"/>
    <property type="project" value="UniProtKB-UniRule"/>
</dbReference>
<dbReference type="GO" id="GO:0042026">
    <property type="term" value="P:protein refolding"/>
    <property type="evidence" value="ECO:0007669"/>
    <property type="project" value="UniProtKB-UniRule"/>
</dbReference>
<dbReference type="CDD" id="cd03344">
    <property type="entry name" value="GroEL"/>
    <property type="match status" value="1"/>
</dbReference>
<dbReference type="FunFam" id="1.10.560.10:FF:000001">
    <property type="entry name" value="60 kDa chaperonin"/>
    <property type="match status" value="1"/>
</dbReference>
<dbReference type="FunFam" id="3.50.7.10:FF:000001">
    <property type="entry name" value="60 kDa chaperonin"/>
    <property type="match status" value="1"/>
</dbReference>
<dbReference type="Gene3D" id="3.50.7.10">
    <property type="entry name" value="GroEL"/>
    <property type="match status" value="1"/>
</dbReference>
<dbReference type="Gene3D" id="1.10.560.10">
    <property type="entry name" value="GroEL-like equatorial domain"/>
    <property type="match status" value="1"/>
</dbReference>
<dbReference type="Gene3D" id="3.30.260.10">
    <property type="entry name" value="TCP-1-like chaperonin intermediate domain"/>
    <property type="match status" value="1"/>
</dbReference>
<dbReference type="HAMAP" id="MF_00600">
    <property type="entry name" value="CH60"/>
    <property type="match status" value="1"/>
</dbReference>
<dbReference type="InterPro" id="IPR018370">
    <property type="entry name" value="Chaperonin_Cpn60_CS"/>
</dbReference>
<dbReference type="InterPro" id="IPR001844">
    <property type="entry name" value="Cpn60/GroEL"/>
</dbReference>
<dbReference type="InterPro" id="IPR002423">
    <property type="entry name" value="Cpn60/GroEL/TCP-1"/>
</dbReference>
<dbReference type="InterPro" id="IPR027409">
    <property type="entry name" value="GroEL-like_apical_dom_sf"/>
</dbReference>
<dbReference type="InterPro" id="IPR027413">
    <property type="entry name" value="GROEL-like_equatorial_sf"/>
</dbReference>
<dbReference type="InterPro" id="IPR027410">
    <property type="entry name" value="TCP-1-like_intermed_sf"/>
</dbReference>
<dbReference type="NCBIfam" id="TIGR02348">
    <property type="entry name" value="GroEL"/>
    <property type="match status" value="1"/>
</dbReference>
<dbReference type="NCBIfam" id="NF000592">
    <property type="entry name" value="PRK00013.1"/>
    <property type="match status" value="1"/>
</dbReference>
<dbReference type="NCBIfam" id="NF009487">
    <property type="entry name" value="PRK12849.1"/>
    <property type="match status" value="1"/>
</dbReference>
<dbReference type="NCBIfam" id="NF009488">
    <property type="entry name" value="PRK12850.1"/>
    <property type="match status" value="1"/>
</dbReference>
<dbReference type="NCBIfam" id="NF009489">
    <property type="entry name" value="PRK12851.1"/>
    <property type="match status" value="1"/>
</dbReference>
<dbReference type="PANTHER" id="PTHR45633">
    <property type="entry name" value="60 KDA HEAT SHOCK PROTEIN, MITOCHONDRIAL"/>
    <property type="match status" value="1"/>
</dbReference>
<dbReference type="Pfam" id="PF00118">
    <property type="entry name" value="Cpn60_TCP1"/>
    <property type="match status" value="1"/>
</dbReference>
<dbReference type="PRINTS" id="PR00298">
    <property type="entry name" value="CHAPERONIN60"/>
</dbReference>
<dbReference type="SUPFAM" id="SSF52029">
    <property type="entry name" value="GroEL apical domain-like"/>
    <property type="match status" value="1"/>
</dbReference>
<dbReference type="SUPFAM" id="SSF48592">
    <property type="entry name" value="GroEL equatorial domain-like"/>
    <property type="match status" value="1"/>
</dbReference>
<dbReference type="SUPFAM" id="SSF54849">
    <property type="entry name" value="GroEL-intermediate domain like"/>
    <property type="match status" value="1"/>
</dbReference>
<dbReference type="PROSITE" id="PS00296">
    <property type="entry name" value="CHAPERONINS_CPN60"/>
    <property type="match status" value="1"/>
</dbReference>
<accession>Q2YUD8</accession>
<protein>
    <recommendedName>
        <fullName evidence="1">Chaperonin GroEL</fullName>
        <ecNumber evidence="1">5.6.1.7</ecNumber>
    </recommendedName>
    <alternativeName>
        <fullName evidence="1">60 kDa chaperonin</fullName>
    </alternativeName>
    <alternativeName>
        <fullName evidence="1">Chaperonin-60</fullName>
        <shortName evidence="1">Cpn60</shortName>
    </alternativeName>
</protein>
<reference key="1">
    <citation type="journal article" date="2007" name="PLoS ONE">
        <title>Molecular correlates of host specialization in Staphylococcus aureus.</title>
        <authorList>
            <person name="Herron-Olson L."/>
            <person name="Fitzgerald J.R."/>
            <person name="Musser J.M."/>
            <person name="Kapur V."/>
        </authorList>
    </citation>
    <scope>NUCLEOTIDE SEQUENCE [LARGE SCALE GENOMIC DNA]</scope>
    <source>
        <strain>bovine RF122 / ET3-1</strain>
    </source>
</reference>
<organism>
    <name type="scientific">Staphylococcus aureus (strain bovine RF122 / ET3-1)</name>
    <dbReference type="NCBI Taxonomy" id="273036"/>
    <lineage>
        <taxon>Bacteria</taxon>
        <taxon>Bacillati</taxon>
        <taxon>Bacillota</taxon>
        <taxon>Bacilli</taxon>
        <taxon>Bacillales</taxon>
        <taxon>Staphylococcaceae</taxon>
        <taxon>Staphylococcus</taxon>
    </lineage>
</organism>